<reference key="1">
    <citation type="journal article" date="2008" name="PLoS Genet.">
        <title>Genomic islands in the pathogenic filamentous fungus Aspergillus fumigatus.</title>
        <authorList>
            <person name="Fedorova N.D."/>
            <person name="Khaldi N."/>
            <person name="Joardar V.S."/>
            <person name="Maiti R."/>
            <person name="Amedeo P."/>
            <person name="Anderson M.J."/>
            <person name="Crabtree J."/>
            <person name="Silva J.C."/>
            <person name="Badger J.H."/>
            <person name="Albarraq A."/>
            <person name="Angiuoli S."/>
            <person name="Bussey H."/>
            <person name="Bowyer P."/>
            <person name="Cotty P.J."/>
            <person name="Dyer P.S."/>
            <person name="Egan A."/>
            <person name="Galens K."/>
            <person name="Fraser-Liggett C.M."/>
            <person name="Haas B.J."/>
            <person name="Inman J.M."/>
            <person name="Kent R."/>
            <person name="Lemieux S."/>
            <person name="Malavazi I."/>
            <person name="Orvis J."/>
            <person name="Roemer T."/>
            <person name="Ronning C.M."/>
            <person name="Sundaram J.P."/>
            <person name="Sutton G."/>
            <person name="Turner G."/>
            <person name="Venter J.C."/>
            <person name="White O.R."/>
            <person name="Whitty B.R."/>
            <person name="Youngman P."/>
            <person name="Wolfe K.H."/>
            <person name="Goldman G.H."/>
            <person name="Wortman J.R."/>
            <person name="Jiang B."/>
            <person name="Denning D.W."/>
            <person name="Nierman W.C."/>
        </authorList>
    </citation>
    <scope>NUCLEOTIDE SEQUENCE [LARGE SCALE GENOMIC DNA]</scope>
    <source>
        <strain>ATCC 1007 / CBS 513.65 / DSM 816 / NCTC 3887 / NRRL 1 / QM 1276 / 107</strain>
    </source>
</reference>
<protein>
    <recommendedName>
        <fullName evidence="1">Eukaryotic translation initiation factor 3 subunit C</fullName>
        <shortName evidence="1">eIF3c</shortName>
    </recommendedName>
    <alternativeName>
        <fullName evidence="1">Eukaryotic translation initiation factor 3 93 kDa subunit homolog</fullName>
        <shortName evidence="1">eIF3 p93</shortName>
    </alternativeName>
    <alternativeName>
        <fullName evidence="1">Translation initiation factor eIF3, p93 subunit homolog</fullName>
    </alternativeName>
</protein>
<gene>
    <name type="primary">nip1</name>
    <name type="ORF">ACLA_054580</name>
</gene>
<proteinExistence type="inferred from homology"/>
<feature type="chain" id="PRO_0000364273" description="Eukaryotic translation initiation factor 3 subunit C">
    <location>
        <begin position="1"/>
        <end position="862"/>
    </location>
</feature>
<feature type="domain" description="PCI" evidence="2">
    <location>
        <begin position="601"/>
        <end position="775"/>
    </location>
</feature>
<feature type="region of interest" description="Disordered" evidence="3">
    <location>
        <begin position="1"/>
        <end position="81"/>
    </location>
</feature>
<feature type="region of interest" description="Disordered" evidence="3">
    <location>
        <begin position="814"/>
        <end position="862"/>
    </location>
</feature>
<feature type="compositionally biased region" description="Gly residues" evidence="3">
    <location>
        <begin position="1"/>
        <end position="10"/>
    </location>
</feature>
<feature type="compositionally biased region" description="Acidic residues" evidence="3">
    <location>
        <begin position="16"/>
        <end position="52"/>
    </location>
</feature>
<feature type="compositionally biased region" description="Gly residues" evidence="3">
    <location>
        <begin position="819"/>
        <end position="833"/>
    </location>
</feature>
<feature type="compositionally biased region" description="Low complexity" evidence="3">
    <location>
        <begin position="835"/>
        <end position="844"/>
    </location>
</feature>
<feature type="compositionally biased region" description="Gly residues" evidence="3">
    <location>
        <begin position="845"/>
        <end position="862"/>
    </location>
</feature>
<sequence>MSRFFYGGGSDSESSSSDEEELYERDEEEQSEEEESSEEEETSEEGSDDEEGGVTGAARFMRDMSESEESEDEEKTTVVKSAKDKRLEELESTMKLIDNAKKINDWAVISTEFDKLNRQIVKITQAGPTPRVYIKGVADLEDFVNETVSKQKSGDKKLNASNAKGFNAVKQRIKKNNKDYANLIDKYRKNKEAFLEGKDEAAAPAAAAPRVAKLERVEAPVDVPVADDEGFATVGRGGKTLQYTPESILKHLRVIVESRGKKNTDRLEQIRTMEKLLEVAQNPYQRIRVYLTLISTRFDLTSTSSANYMAPEMWKSAEQDFSSLLSVLENNRDYVVTEGVDEWEDDEKQPQVAAGETLYIPGSVVSYAERLDDELTRSLQHIDPHTAEYIERLSDEKQLYTSLVRAQAYVEGLSKAEKSDPKQDSVNRVVMRRLEHVYFKPSQVITILEDATWKALPSELDSGVTPRGKTGDVENLVLTLCNYLFQYSDGIIRARAMLCQIYFLALHDQYYRARDLMLMSHLTENISNFDVSTQILFNRTLVQIGLCAFRAGLIYEAQNTLSEVCGSGRQKELLAQGIILQRYSTVSPEQERLERQRQLPFHMHINLELLECIYLTSSMFLEVPLMAQTSSSPELKRRVISKTFRRMLDYNERQVFTGPAENTRDGVIMSAKFLAAGDWKKAAEMLNSIKIWELMPQPEKIKEMLSQQIQEEGLRTYLFTYAPFYDSVSVATLASMFELSEKKISAIISRMISHEELAAALDQVNGAIVFRKGVELSRLQSQIVTLADKSMALLEGNEKTLEQRTQGMANAFQRDQGAGARGGRGGGRGGHARGGARFPGQQGRRPGGQQFGGGALGGAIKA</sequence>
<evidence type="ECO:0000255" key="1">
    <source>
        <dbReference type="HAMAP-Rule" id="MF_03002"/>
    </source>
</evidence>
<evidence type="ECO:0000255" key="2">
    <source>
        <dbReference type="PROSITE-ProRule" id="PRU01185"/>
    </source>
</evidence>
<evidence type="ECO:0000256" key="3">
    <source>
        <dbReference type="SAM" id="MobiDB-lite"/>
    </source>
</evidence>
<name>EIF3C_ASPCL</name>
<keyword id="KW-0963">Cytoplasm</keyword>
<keyword id="KW-0396">Initiation factor</keyword>
<keyword id="KW-0648">Protein biosynthesis</keyword>
<keyword id="KW-1185">Reference proteome</keyword>
<organism>
    <name type="scientific">Aspergillus clavatus (strain ATCC 1007 / CBS 513.65 / DSM 816 / NCTC 3887 / NRRL 1 / QM 1276 / 107)</name>
    <dbReference type="NCBI Taxonomy" id="344612"/>
    <lineage>
        <taxon>Eukaryota</taxon>
        <taxon>Fungi</taxon>
        <taxon>Dikarya</taxon>
        <taxon>Ascomycota</taxon>
        <taxon>Pezizomycotina</taxon>
        <taxon>Eurotiomycetes</taxon>
        <taxon>Eurotiomycetidae</taxon>
        <taxon>Eurotiales</taxon>
        <taxon>Aspergillaceae</taxon>
        <taxon>Aspergillus</taxon>
        <taxon>Aspergillus subgen. Fumigati</taxon>
    </lineage>
</organism>
<comment type="function">
    <text evidence="1">Component of the eukaryotic translation initiation factor 3 (eIF-3) complex, which is involved in protein synthesis of a specialized repertoire of mRNAs and, together with other initiation factors, stimulates binding of mRNA and methionyl-tRNAi to the 40S ribosome. The eIF-3 complex specifically targets and initiates translation of a subset of mRNAs involved in cell proliferation.</text>
</comment>
<comment type="subunit">
    <text evidence="1">Component of the eukaryotic translation initiation factor 3 (eIF-3) complex.</text>
</comment>
<comment type="subcellular location">
    <subcellularLocation>
        <location evidence="1">Cytoplasm</location>
    </subcellularLocation>
</comment>
<comment type="similarity">
    <text evidence="1">Belongs to the eIF-3 subunit C family.</text>
</comment>
<dbReference type="EMBL" id="DS027048">
    <property type="protein sequence ID" value="EAW13411.1"/>
    <property type="molecule type" value="Genomic_DNA"/>
</dbReference>
<dbReference type="RefSeq" id="XP_001274837.1">
    <property type="nucleotide sequence ID" value="XM_001274836.1"/>
</dbReference>
<dbReference type="SMR" id="A1C987"/>
<dbReference type="STRING" id="344612.A1C987"/>
<dbReference type="EnsemblFungi" id="EAW13411">
    <property type="protein sequence ID" value="EAW13411"/>
    <property type="gene ID" value="ACLA_054580"/>
</dbReference>
<dbReference type="GeneID" id="4707059"/>
<dbReference type="KEGG" id="act:ACLA_054580"/>
<dbReference type="VEuPathDB" id="FungiDB:ACLA_054580"/>
<dbReference type="eggNOG" id="KOG1076">
    <property type="taxonomic scope" value="Eukaryota"/>
</dbReference>
<dbReference type="HOGENOM" id="CLU_004304_0_2_1"/>
<dbReference type="OMA" id="FRCGLIK"/>
<dbReference type="OrthoDB" id="29647at2759"/>
<dbReference type="Proteomes" id="UP000006701">
    <property type="component" value="Unassembled WGS sequence"/>
</dbReference>
<dbReference type="GO" id="GO:0010494">
    <property type="term" value="C:cytoplasmic stress granule"/>
    <property type="evidence" value="ECO:0007669"/>
    <property type="project" value="EnsemblFungi"/>
</dbReference>
<dbReference type="GO" id="GO:0016282">
    <property type="term" value="C:eukaryotic 43S preinitiation complex"/>
    <property type="evidence" value="ECO:0007669"/>
    <property type="project" value="UniProtKB-UniRule"/>
</dbReference>
<dbReference type="GO" id="GO:0033290">
    <property type="term" value="C:eukaryotic 48S preinitiation complex"/>
    <property type="evidence" value="ECO:0007669"/>
    <property type="project" value="UniProtKB-UniRule"/>
</dbReference>
<dbReference type="GO" id="GO:0071540">
    <property type="term" value="C:eukaryotic translation initiation factor 3 complex, eIF3e"/>
    <property type="evidence" value="ECO:0007669"/>
    <property type="project" value="EnsemblFungi"/>
</dbReference>
<dbReference type="GO" id="GO:0071541">
    <property type="term" value="C:eukaryotic translation initiation factor 3 complex, eIF3m"/>
    <property type="evidence" value="ECO:0007669"/>
    <property type="project" value="EnsemblFungi"/>
</dbReference>
<dbReference type="GO" id="GO:0043614">
    <property type="term" value="C:multi-eIF complex"/>
    <property type="evidence" value="ECO:0007669"/>
    <property type="project" value="EnsemblFungi"/>
</dbReference>
<dbReference type="GO" id="GO:0003723">
    <property type="term" value="F:RNA binding"/>
    <property type="evidence" value="ECO:0007669"/>
    <property type="project" value="InterPro"/>
</dbReference>
<dbReference type="GO" id="GO:0003743">
    <property type="term" value="F:translation initiation factor activity"/>
    <property type="evidence" value="ECO:0007669"/>
    <property type="project" value="UniProtKB-UniRule"/>
</dbReference>
<dbReference type="GO" id="GO:0031369">
    <property type="term" value="F:translation initiation factor binding"/>
    <property type="evidence" value="ECO:0007669"/>
    <property type="project" value="EnsemblFungi"/>
</dbReference>
<dbReference type="GO" id="GO:0001732">
    <property type="term" value="P:formation of cytoplasmic translation initiation complex"/>
    <property type="evidence" value="ECO:0007669"/>
    <property type="project" value="UniProtKB-UniRule"/>
</dbReference>
<dbReference type="FunFam" id="1.10.10.10:FF:000300">
    <property type="entry name" value="Eukaryotic translation initiation factor 3 subunit C"/>
    <property type="match status" value="1"/>
</dbReference>
<dbReference type="Gene3D" id="1.10.10.10">
    <property type="entry name" value="Winged helix-like DNA-binding domain superfamily/Winged helix DNA-binding domain"/>
    <property type="match status" value="1"/>
</dbReference>
<dbReference type="HAMAP" id="MF_03002">
    <property type="entry name" value="eIF3c"/>
    <property type="match status" value="1"/>
</dbReference>
<dbReference type="InterPro" id="IPR027516">
    <property type="entry name" value="EIF3C"/>
</dbReference>
<dbReference type="InterPro" id="IPR008905">
    <property type="entry name" value="EIF3C_N_dom"/>
</dbReference>
<dbReference type="InterPro" id="IPR000717">
    <property type="entry name" value="PCI_dom"/>
</dbReference>
<dbReference type="InterPro" id="IPR036388">
    <property type="entry name" value="WH-like_DNA-bd_sf"/>
</dbReference>
<dbReference type="InterPro" id="IPR036390">
    <property type="entry name" value="WH_DNA-bd_sf"/>
</dbReference>
<dbReference type="PANTHER" id="PTHR13937">
    <property type="entry name" value="EUKARYOTIC TRANSLATION INITATION FACTOR 3, SUBUNIT 8 EIF3S8 -RELATED"/>
    <property type="match status" value="1"/>
</dbReference>
<dbReference type="PANTHER" id="PTHR13937:SF0">
    <property type="entry name" value="EUKARYOTIC TRANSLATION INITIATION FACTOR 3 SUBUNIT C-RELATED"/>
    <property type="match status" value="1"/>
</dbReference>
<dbReference type="Pfam" id="PF05470">
    <property type="entry name" value="eIF-3c_N"/>
    <property type="match status" value="1"/>
</dbReference>
<dbReference type="Pfam" id="PF01399">
    <property type="entry name" value="PCI"/>
    <property type="match status" value="1"/>
</dbReference>
<dbReference type="SMART" id="SM00088">
    <property type="entry name" value="PINT"/>
    <property type="match status" value="1"/>
</dbReference>
<dbReference type="SUPFAM" id="SSF46785">
    <property type="entry name" value="Winged helix' DNA-binding domain"/>
    <property type="match status" value="1"/>
</dbReference>
<dbReference type="PROSITE" id="PS50250">
    <property type="entry name" value="PCI"/>
    <property type="match status" value="1"/>
</dbReference>
<accession>A1C987</accession>